<accession>Q4IER8</accession>
<accession>A0A0E0S6Z2</accession>
<accession>V6R2I3</accession>
<reference key="1">
    <citation type="journal article" date="2007" name="Science">
        <title>The Fusarium graminearum genome reveals a link between localized polymorphism and pathogen specialization.</title>
        <authorList>
            <person name="Cuomo C.A."/>
            <person name="Gueldener U."/>
            <person name="Xu J.-R."/>
            <person name="Trail F."/>
            <person name="Turgeon B.G."/>
            <person name="Di Pietro A."/>
            <person name="Walton J.D."/>
            <person name="Ma L.-J."/>
            <person name="Baker S.E."/>
            <person name="Rep M."/>
            <person name="Adam G."/>
            <person name="Antoniw J."/>
            <person name="Baldwin T."/>
            <person name="Calvo S.E."/>
            <person name="Chang Y.-L."/>
            <person name="DeCaprio D."/>
            <person name="Gale L.R."/>
            <person name="Gnerre S."/>
            <person name="Goswami R.S."/>
            <person name="Hammond-Kosack K."/>
            <person name="Harris L.J."/>
            <person name="Hilburn K."/>
            <person name="Kennell J.C."/>
            <person name="Kroken S."/>
            <person name="Magnuson J.K."/>
            <person name="Mannhaupt G."/>
            <person name="Mauceli E.W."/>
            <person name="Mewes H.-W."/>
            <person name="Mitterbauer R."/>
            <person name="Muehlbauer G."/>
            <person name="Muensterkoetter M."/>
            <person name="Nelson D."/>
            <person name="O'Donnell K."/>
            <person name="Ouellet T."/>
            <person name="Qi W."/>
            <person name="Quesneville H."/>
            <person name="Roncero M.I.G."/>
            <person name="Seong K.-Y."/>
            <person name="Tetko I.V."/>
            <person name="Urban M."/>
            <person name="Waalwijk C."/>
            <person name="Ward T.J."/>
            <person name="Yao J."/>
            <person name="Birren B.W."/>
            <person name="Kistler H.C."/>
        </authorList>
    </citation>
    <scope>NUCLEOTIDE SEQUENCE [LARGE SCALE GENOMIC DNA]</scope>
    <source>
        <strain>ATCC MYA-4620 / CBS 123657 / FGSC 9075 / NRRL 31084 / PH-1</strain>
    </source>
</reference>
<reference key="2">
    <citation type="journal article" date="2010" name="Nature">
        <title>Comparative genomics reveals mobile pathogenicity chromosomes in Fusarium.</title>
        <authorList>
            <person name="Ma L.-J."/>
            <person name="van der Does H.C."/>
            <person name="Borkovich K.A."/>
            <person name="Coleman J.J."/>
            <person name="Daboussi M.-J."/>
            <person name="Di Pietro A."/>
            <person name="Dufresne M."/>
            <person name="Freitag M."/>
            <person name="Grabherr M."/>
            <person name="Henrissat B."/>
            <person name="Houterman P.M."/>
            <person name="Kang S."/>
            <person name="Shim W.-B."/>
            <person name="Woloshuk C."/>
            <person name="Xie X."/>
            <person name="Xu J.-R."/>
            <person name="Antoniw J."/>
            <person name="Baker S.E."/>
            <person name="Bluhm B.H."/>
            <person name="Breakspear A."/>
            <person name="Brown D.W."/>
            <person name="Butchko R.A.E."/>
            <person name="Chapman S."/>
            <person name="Coulson R."/>
            <person name="Coutinho P.M."/>
            <person name="Danchin E.G.J."/>
            <person name="Diener A."/>
            <person name="Gale L.R."/>
            <person name="Gardiner D.M."/>
            <person name="Goff S."/>
            <person name="Hammond-Kosack K.E."/>
            <person name="Hilburn K."/>
            <person name="Hua-Van A."/>
            <person name="Jonkers W."/>
            <person name="Kazan K."/>
            <person name="Kodira C.D."/>
            <person name="Koehrsen M."/>
            <person name="Kumar L."/>
            <person name="Lee Y.-H."/>
            <person name="Li L."/>
            <person name="Manners J.M."/>
            <person name="Miranda-Saavedra D."/>
            <person name="Mukherjee M."/>
            <person name="Park G."/>
            <person name="Park J."/>
            <person name="Park S.-Y."/>
            <person name="Proctor R.H."/>
            <person name="Regev A."/>
            <person name="Ruiz-Roldan M.C."/>
            <person name="Sain D."/>
            <person name="Sakthikumar S."/>
            <person name="Sykes S."/>
            <person name="Schwartz D.C."/>
            <person name="Turgeon B.G."/>
            <person name="Wapinski I."/>
            <person name="Yoder O."/>
            <person name="Young S."/>
            <person name="Zeng Q."/>
            <person name="Zhou S."/>
            <person name="Galagan J."/>
            <person name="Cuomo C.A."/>
            <person name="Kistler H.C."/>
            <person name="Rep M."/>
        </authorList>
    </citation>
    <scope>GENOME REANNOTATION</scope>
    <source>
        <strain>ATCC MYA-4620 / CBS 123657 / FGSC 9075 / NRRL 31084 / PH-1</strain>
    </source>
</reference>
<reference key="3">
    <citation type="journal article" date="2015" name="BMC Genomics">
        <title>The completed genome sequence of the pathogenic ascomycete fungus Fusarium graminearum.</title>
        <authorList>
            <person name="King R."/>
            <person name="Urban M."/>
            <person name="Hammond-Kosack M.C.U."/>
            <person name="Hassani-Pak K."/>
            <person name="Hammond-Kosack K.E."/>
        </authorList>
    </citation>
    <scope>NUCLEOTIDE SEQUENCE [LARGE SCALE GENOMIC DNA]</scope>
    <source>
        <strain>ATCC MYA-4620 / CBS 123657 / FGSC 9075 / NRRL 31084 / PH-1</strain>
    </source>
</reference>
<feature type="initiator methionine" description="Removed" evidence="1">
    <location>
        <position position="1"/>
    </location>
</feature>
<feature type="chain" id="PRO_0000270592" description="Histone H3">
    <location>
        <begin position="2"/>
        <end position="136"/>
    </location>
</feature>
<feature type="region of interest" description="Disordered" evidence="2">
    <location>
        <begin position="1"/>
        <end position="43"/>
    </location>
</feature>
<feature type="modified residue" description="N6,N6,N6-trimethyllysine; alternate" evidence="1">
    <location>
        <position position="5"/>
    </location>
</feature>
<feature type="modified residue" description="N6,N6-dimethyllysine; alternate" evidence="1">
    <location>
        <position position="5"/>
    </location>
</feature>
<feature type="modified residue" description="N6-methyllysine; alternate" evidence="1">
    <location>
        <position position="5"/>
    </location>
</feature>
<feature type="modified residue" description="N6-acetyllysine; alternate" evidence="1">
    <location>
        <position position="10"/>
    </location>
</feature>
<feature type="modified residue" description="N6-methyllysine; alternate" evidence="1">
    <location>
        <position position="10"/>
    </location>
</feature>
<feature type="modified residue" description="Phosphoserine" evidence="1">
    <location>
        <position position="11"/>
    </location>
</feature>
<feature type="modified residue" description="N6,N6-dimethyllysine; alternate" evidence="1">
    <location>
        <position position="15"/>
    </location>
</feature>
<feature type="modified residue" description="N6-acetyllysine; alternate" evidence="1">
    <location>
        <position position="15"/>
    </location>
</feature>
<feature type="modified residue" description="N6-methyllysine; alternate" evidence="1">
    <location>
        <position position="15"/>
    </location>
</feature>
<feature type="modified residue" description="N6-acetyllysine; alternate" evidence="1">
    <location>
        <position position="19"/>
    </location>
</feature>
<feature type="modified residue" description="N6-methyllysine; alternate" evidence="1">
    <location>
        <position position="19"/>
    </location>
</feature>
<feature type="modified residue" description="N6-acetyllysine; alternate" evidence="1">
    <location>
        <position position="24"/>
    </location>
</feature>
<feature type="modified residue" description="N6-methyllysine; alternate" evidence="1">
    <location>
        <position position="24"/>
    </location>
</feature>
<feature type="modified residue" description="N6,N6,N6-trimethyllysine; alternate" evidence="1">
    <location>
        <position position="28"/>
    </location>
</feature>
<feature type="modified residue" description="N6,N6-dimethyllysine; alternate" evidence="1">
    <location>
        <position position="28"/>
    </location>
</feature>
<feature type="modified residue" description="N6-acetyllysine; alternate" evidence="1">
    <location>
        <position position="28"/>
    </location>
</feature>
<feature type="modified residue" description="N6-methyllysine; alternate" evidence="1">
    <location>
        <position position="28"/>
    </location>
</feature>
<feature type="modified residue" description="N6,N6,N6-trimethyllysine; alternate" evidence="1">
    <location>
        <position position="37"/>
    </location>
</feature>
<feature type="modified residue" description="N6,N6-dimethyllysine; alternate" evidence="1">
    <location>
        <position position="37"/>
    </location>
</feature>
<feature type="modified residue" description="N6-acetyllysine; alternate" evidence="1">
    <location>
        <position position="37"/>
    </location>
</feature>
<feature type="modified residue" description="N6-methyllysine; alternate" evidence="1">
    <location>
        <position position="37"/>
    </location>
</feature>
<feature type="modified residue" description="N6-acetyllysine" evidence="1">
    <location>
        <position position="57"/>
    </location>
</feature>
<feature type="modified residue" description="N6-acetyllysine" evidence="1">
    <location>
        <position position="65"/>
    </location>
</feature>
<feature type="modified residue" description="N6,N6,N6-trimethyllysine; alternate" evidence="1">
    <location>
        <position position="80"/>
    </location>
</feature>
<feature type="modified residue" description="N6,N6-dimethyllysine; alternate" evidence="1">
    <location>
        <position position="80"/>
    </location>
</feature>
<feature type="modified residue" description="N6-methyllysine; alternate" evidence="1">
    <location>
        <position position="80"/>
    </location>
</feature>
<name>H3_GIBZE</name>
<dbReference type="EMBL" id="DS231664">
    <property type="protein sequence ID" value="ESU08828.1"/>
    <property type="molecule type" value="Genomic_DNA"/>
</dbReference>
<dbReference type="EMBL" id="HG970333">
    <property type="protein sequence ID" value="CEF79267.1"/>
    <property type="molecule type" value="Genomic_DNA"/>
</dbReference>
<dbReference type="RefSeq" id="XP_011321327.1">
    <property type="nucleotide sequence ID" value="XM_011323025.1"/>
</dbReference>
<dbReference type="SMR" id="Q4IER8"/>
<dbReference type="FunCoup" id="Q4IER8">
    <property type="interactions" value="847"/>
</dbReference>
<dbReference type="STRING" id="229533.Q4IER8"/>
<dbReference type="GeneID" id="23551548"/>
<dbReference type="KEGG" id="fgr:FGSG_04290"/>
<dbReference type="VEuPathDB" id="FungiDB:FGRAMPH1_01G14931"/>
<dbReference type="eggNOG" id="KOG1745">
    <property type="taxonomic scope" value="Eukaryota"/>
</dbReference>
<dbReference type="HOGENOM" id="CLU_078295_4_0_1"/>
<dbReference type="InParanoid" id="Q4IER8"/>
<dbReference type="OrthoDB" id="97160at110618"/>
<dbReference type="Proteomes" id="UP000070720">
    <property type="component" value="Chromosome 2"/>
</dbReference>
<dbReference type="GO" id="GO:0000786">
    <property type="term" value="C:nucleosome"/>
    <property type="evidence" value="ECO:0007669"/>
    <property type="project" value="UniProtKB-KW"/>
</dbReference>
<dbReference type="GO" id="GO:0005634">
    <property type="term" value="C:nucleus"/>
    <property type="evidence" value="ECO:0007669"/>
    <property type="project" value="UniProtKB-SubCell"/>
</dbReference>
<dbReference type="GO" id="GO:0003677">
    <property type="term" value="F:DNA binding"/>
    <property type="evidence" value="ECO:0007669"/>
    <property type="project" value="UniProtKB-KW"/>
</dbReference>
<dbReference type="GO" id="GO:0046982">
    <property type="term" value="F:protein heterodimerization activity"/>
    <property type="evidence" value="ECO:0007669"/>
    <property type="project" value="InterPro"/>
</dbReference>
<dbReference type="GO" id="GO:0030527">
    <property type="term" value="F:structural constituent of chromatin"/>
    <property type="evidence" value="ECO:0007669"/>
    <property type="project" value="InterPro"/>
</dbReference>
<dbReference type="CDD" id="cd22911">
    <property type="entry name" value="HFD_H3"/>
    <property type="match status" value="1"/>
</dbReference>
<dbReference type="FunFam" id="1.10.20.10:FF:000010">
    <property type="entry name" value="Histone H3"/>
    <property type="match status" value="1"/>
</dbReference>
<dbReference type="Gene3D" id="1.10.20.10">
    <property type="entry name" value="Histone, subunit A"/>
    <property type="match status" value="1"/>
</dbReference>
<dbReference type="InterPro" id="IPR009072">
    <property type="entry name" value="Histone-fold"/>
</dbReference>
<dbReference type="InterPro" id="IPR007125">
    <property type="entry name" value="Histone_H2A/H2B/H3"/>
</dbReference>
<dbReference type="InterPro" id="IPR000164">
    <property type="entry name" value="Histone_H3/CENP-A"/>
</dbReference>
<dbReference type="PANTHER" id="PTHR11426">
    <property type="entry name" value="HISTONE H3"/>
    <property type="match status" value="1"/>
</dbReference>
<dbReference type="Pfam" id="PF00125">
    <property type="entry name" value="Histone"/>
    <property type="match status" value="1"/>
</dbReference>
<dbReference type="PRINTS" id="PR00622">
    <property type="entry name" value="HISTONEH3"/>
</dbReference>
<dbReference type="SMART" id="SM00428">
    <property type="entry name" value="H3"/>
    <property type="match status" value="1"/>
</dbReference>
<dbReference type="SUPFAM" id="SSF47113">
    <property type="entry name" value="Histone-fold"/>
    <property type="match status" value="1"/>
</dbReference>
<dbReference type="PROSITE" id="PS00322">
    <property type="entry name" value="HISTONE_H3_1"/>
    <property type="match status" value="1"/>
</dbReference>
<dbReference type="PROSITE" id="PS00959">
    <property type="entry name" value="HISTONE_H3_2"/>
    <property type="match status" value="1"/>
</dbReference>
<gene>
    <name type="primary">HHT1</name>
    <name type="ORF">FGRRES_04290</name>
    <name type="ORF">FGSG_04290</name>
</gene>
<protein>
    <recommendedName>
        <fullName>Histone H3</fullName>
    </recommendedName>
</protein>
<keyword id="KW-0007">Acetylation</keyword>
<keyword id="KW-0158">Chromosome</keyword>
<keyword id="KW-0238">DNA-binding</keyword>
<keyword id="KW-0488">Methylation</keyword>
<keyword id="KW-0544">Nucleosome core</keyword>
<keyword id="KW-0539">Nucleus</keyword>
<keyword id="KW-0597">Phosphoprotein</keyword>
<keyword id="KW-1185">Reference proteome</keyword>
<organism>
    <name type="scientific">Gibberella zeae (strain ATCC MYA-4620 / CBS 123657 / FGSC 9075 / NRRL 31084 / PH-1)</name>
    <name type="common">Wheat head blight fungus</name>
    <name type="synonym">Fusarium graminearum</name>
    <dbReference type="NCBI Taxonomy" id="229533"/>
    <lineage>
        <taxon>Eukaryota</taxon>
        <taxon>Fungi</taxon>
        <taxon>Dikarya</taxon>
        <taxon>Ascomycota</taxon>
        <taxon>Pezizomycotina</taxon>
        <taxon>Sordariomycetes</taxon>
        <taxon>Hypocreomycetidae</taxon>
        <taxon>Hypocreales</taxon>
        <taxon>Nectriaceae</taxon>
        <taxon>Fusarium</taxon>
    </lineage>
</organism>
<comment type="function">
    <text>Core component of nucleosome. Nucleosomes wrap and compact DNA into chromatin, limiting DNA accessibility to the cellular machineries which require DNA as a template. Histones thereby play a central role in transcription regulation, DNA repair, DNA replication and chromosomal stability. DNA accessibility is regulated via a complex set of post-translational modifications of histones, also called histone code, and nucleosome remodeling.</text>
</comment>
<comment type="subunit">
    <text>The nucleosome is a histone octamer containing two molecules each of H2A, H2B, H3 and H4 assembled in one H3-H4 heterotetramer and two H2A-H2B heterodimers. The octamer wraps approximately 147 bp of DNA.</text>
</comment>
<comment type="subcellular location">
    <subcellularLocation>
        <location>Nucleus</location>
    </subcellularLocation>
    <subcellularLocation>
        <location>Chromosome</location>
    </subcellularLocation>
</comment>
<comment type="PTM">
    <text evidence="1">Phosphorylated to form H3S10ph. H3S10ph promotes subsequent H3K14ac formation and is required for transcriptional activation through TBP recruitment to the promoters (By similarity).</text>
</comment>
<comment type="PTM">
    <text evidence="1">Mono-, di- and trimethylated by the COMPASS complex to form H3K4me1/2/3. H3K4me activates gene expression by regulating transcription elongation and plays a role in telomere length maintenance. H3K4me enrichment correlates with transcription levels, and occurs in a 5' to 3' gradient with H3K4me3 enrichment at the 5'-end of genes, shifting to H3K4me2 and then H3K4me1. Methylated by SET2 to form H3K36me. H3K36me represses gene expression. Methylated by DOT1 to form H3K79me. H3K79me is required for association of SIR proteins with telomeric regions and for telomeric silencing. The COMPASS-mediated formation of H3K4me2/3 and the DOT1-mediated formation of H3K79me require H2BK123ub1 (By similarity).</text>
</comment>
<comment type="PTM">
    <text evidence="1">Acetylation of histone H3 leads to transcriptional activation. H3K14ac formation by GCN5 is promoted by H3S10ph. H3K14ac can also be formed by ESA1. H3K56ac formation occurs predominantly in newly synthesized H3 molecules during G1, S and G2/M of the cell cycle and may be involved in DNA repair (By similarity).</text>
</comment>
<comment type="similarity">
    <text evidence="3">Belongs to the histone H3 family.</text>
</comment>
<comment type="caution">
    <text evidence="3">To ensure consistency between histone entries, we follow the 'Brno' nomenclature for histone modifications, with positions referring to those used in the literature for the 'closest' model organism. Due to slight variations in histone sequences between organisms and to the presence of initiator methionine in UniProtKB/Swiss-Prot sequences, the actual positions of modified amino acids in the sequence generally differ. In this entry the following conventions are used: H3K4me1/2/3 = mono-, di- and trimethylated Lys-5; H3K9ac = acetylated Lys-10; H3K9me1 = monomethylated Lys-10; H3S10ph = phosphorylated Ser-11; H3K14ac = acetylated Lys-15; H3K14me2 = dimethylated Lys-15; H3K18ac = acetylated Lys-19; H3K18me1 = monomethylated Lys-19; H3K23ac = acetylated Lys-24; H3K23me1 = monomethylated Lys-24; H3K27ac = acetylated Lys-28; H3K27me1/2/3 = mono-, di- and trimethylated Lys-28; H3K36ac = acetylated Lys-37; H3K36me1/2/3 = mono-, di- and trimethylated Lys-37; H3K56ac = acetylated Lys-57; H3K64ac = acetylated Lys-65; H3K79me1/2/3 = mono-, di- and trimethylated Lys-80.</text>
</comment>
<proteinExistence type="inferred from homology"/>
<sequence>MARTKQTARKSTGGKAPRKQLASKAARKSAPSTGGVKKPHRYKPGTVALREIRRYQKSTELLIRKLPFQRLVREIAQDFKSDLRFQSSAIGALQESVESYLVSLFEDTNLCAIHAKRVTIQSKDIQLARRLRGERN</sequence>
<evidence type="ECO:0000250" key="1"/>
<evidence type="ECO:0000256" key="2">
    <source>
        <dbReference type="SAM" id="MobiDB-lite"/>
    </source>
</evidence>
<evidence type="ECO:0000305" key="3"/>